<sequence length="103" mass="11369">MSGRGKGGKGLGKGGAKRHRKVLRDNIQGITKPAIRRLARRGGVKRISGLIYEETRGVLKVFLENVIRDAVTYCEHAKRKTVTAMDVVYALKRQGRTLYGFGG</sequence>
<protein>
    <recommendedName>
        <fullName>Histone H4</fullName>
    </recommendedName>
</protein>
<comment type="function">
    <text>Core component of nucleosome. Nucleosomes wrap and compact DNA into chromatin, limiting DNA accessibility to the cellular machineries which require DNA as a template. Histones thereby play a central role in transcription regulation, DNA repair, DNA replication and chromosomal stability. DNA accessibility is regulated via a complex set of post-translational modifications of histones, also called histone code, and nucleosome remodeling.</text>
</comment>
<comment type="subunit">
    <text>The nucleosome is a histone octamer containing two molecules each of H2A, H2B, H3 and H4 assembled in one H3-H4 heterotetramer and two H2A-H2B heterodimers. The octamer wraps approximately 147 bp of DNA.</text>
</comment>
<comment type="subcellular location">
    <subcellularLocation>
        <location evidence="1">Nucleus</location>
    </subcellularLocation>
    <subcellularLocation>
        <location evidence="1">Chromosome</location>
    </subcellularLocation>
</comment>
<comment type="similarity">
    <text evidence="4">Belongs to the histone H4 family.</text>
</comment>
<proteinExistence type="inferred from homology"/>
<reference key="1">
    <citation type="submission" date="1990-07" db="EMBL/GenBank/DDBJ databases">
        <title>Sequence and organisation of histone gene clusters in sea stars.</title>
        <authorList>
            <person name="Wu Y."/>
            <person name="Kowbel D."/>
            <person name="Smith M.J."/>
        </authorList>
    </citation>
    <scope>NUCLEOTIDE SEQUENCE [GENOMIC DNA]</scope>
</reference>
<evidence type="ECO:0000250" key="1"/>
<evidence type="ECO:0000250" key="2">
    <source>
        <dbReference type="UniProtKB" id="P62805"/>
    </source>
</evidence>
<evidence type="ECO:0000256" key="3">
    <source>
        <dbReference type="SAM" id="MobiDB-lite"/>
    </source>
</evidence>
<evidence type="ECO:0000305" key="4"/>
<feature type="initiator methionine" description="Removed" evidence="1">
    <location>
        <position position="1"/>
    </location>
</feature>
<feature type="chain" id="PRO_0000158349" description="Histone H4">
    <location>
        <begin position="2"/>
        <end position="103"/>
    </location>
</feature>
<feature type="DNA-binding region">
    <location>
        <begin position="17"/>
        <end position="21"/>
    </location>
</feature>
<feature type="region of interest" description="Disordered" evidence="3">
    <location>
        <begin position="1"/>
        <end position="20"/>
    </location>
</feature>
<feature type="compositionally biased region" description="Gly residues" evidence="3">
    <location>
        <begin position="1"/>
        <end position="14"/>
    </location>
</feature>
<feature type="modified residue" description="N-acetylserine" evidence="1">
    <location>
        <position position="2"/>
    </location>
</feature>
<feature type="modified residue" description="N6-acetyl-N6-methyllysine; alternate" evidence="2">
    <location>
        <position position="6"/>
    </location>
</feature>
<feature type="modified residue" description="N6-acetyl-N6-methyllysine; alternate" evidence="2">
    <location>
        <position position="13"/>
    </location>
</feature>
<feature type="modified residue" description="N6-acetyllysine" evidence="1">
    <location>
        <position position="17"/>
    </location>
</feature>
<feature type="modified residue" description="N6-methyllysine" evidence="1">
    <location>
        <position position="21"/>
    </location>
</feature>
<keyword id="KW-0007">Acetylation</keyword>
<keyword id="KW-0158">Chromosome</keyword>
<keyword id="KW-0238">DNA-binding</keyword>
<keyword id="KW-0488">Methylation</keyword>
<keyword id="KW-0544">Nucleosome core</keyword>
<keyword id="KW-0539">Nucleus</keyword>
<name>H4_PISBR</name>
<organism>
    <name type="scientific">Pisaster brevispinus</name>
    <name type="common">Short spined sea star</name>
    <name type="synonym">Asterias brevispina</name>
    <dbReference type="NCBI Taxonomy" id="7611"/>
    <lineage>
        <taxon>Eukaryota</taxon>
        <taxon>Metazoa</taxon>
        <taxon>Echinodermata</taxon>
        <taxon>Eleutherozoa</taxon>
        <taxon>Asterozoa</taxon>
        <taxon>Asteroidea</taxon>
        <taxon>Forcipulatacea</taxon>
        <taxon>Forcipulatida</taxon>
        <taxon>Asteriidae</taxon>
        <taxon>Pisaster</taxon>
    </lineage>
</organism>
<dbReference type="EMBL" id="X54112">
    <property type="protein sequence ID" value="CAA38049.1"/>
    <property type="molecule type" value="Genomic_DNA"/>
</dbReference>
<dbReference type="PIR" id="S20666">
    <property type="entry name" value="S20666"/>
</dbReference>
<dbReference type="SMR" id="P62777"/>
<dbReference type="GO" id="GO:0000786">
    <property type="term" value="C:nucleosome"/>
    <property type="evidence" value="ECO:0007669"/>
    <property type="project" value="UniProtKB-KW"/>
</dbReference>
<dbReference type="GO" id="GO:0005634">
    <property type="term" value="C:nucleus"/>
    <property type="evidence" value="ECO:0007669"/>
    <property type="project" value="UniProtKB-SubCell"/>
</dbReference>
<dbReference type="GO" id="GO:0003677">
    <property type="term" value="F:DNA binding"/>
    <property type="evidence" value="ECO:0007669"/>
    <property type="project" value="UniProtKB-KW"/>
</dbReference>
<dbReference type="GO" id="GO:0046982">
    <property type="term" value="F:protein heterodimerization activity"/>
    <property type="evidence" value="ECO:0007669"/>
    <property type="project" value="InterPro"/>
</dbReference>
<dbReference type="GO" id="GO:0030527">
    <property type="term" value="F:structural constituent of chromatin"/>
    <property type="evidence" value="ECO:0007669"/>
    <property type="project" value="InterPro"/>
</dbReference>
<dbReference type="CDD" id="cd22912">
    <property type="entry name" value="HFD_H4"/>
    <property type="match status" value="1"/>
</dbReference>
<dbReference type="FunFam" id="1.10.20.10:FF:000002">
    <property type="entry name" value="Histone H4"/>
    <property type="match status" value="1"/>
</dbReference>
<dbReference type="Gene3D" id="1.10.20.10">
    <property type="entry name" value="Histone, subunit A"/>
    <property type="match status" value="1"/>
</dbReference>
<dbReference type="InterPro" id="IPR035425">
    <property type="entry name" value="CENP-T/H4_C"/>
</dbReference>
<dbReference type="InterPro" id="IPR009072">
    <property type="entry name" value="Histone-fold"/>
</dbReference>
<dbReference type="InterPro" id="IPR001951">
    <property type="entry name" value="Histone_H4"/>
</dbReference>
<dbReference type="InterPro" id="IPR019809">
    <property type="entry name" value="Histone_H4_CS"/>
</dbReference>
<dbReference type="PANTHER" id="PTHR10484">
    <property type="entry name" value="HISTONE H4"/>
    <property type="match status" value="1"/>
</dbReference>
<dbReference type="Pfam" id="PF15511">
    <property type="entry name" value="CENP-T_C"/>
    <property type="match status" value="1"/>
</dbReference>
<dbReference type="PRINTS" id="PR00623">
    <property type="entry name" value="HISTONEH4"/>
</dbReference>
<dbReference type="SMART" id="SM00417">
    <property type="entry name" value="H4"/>
    <property type="match status" value="1"/>
</dbReference>
<dbReference type="SUPFAM" id="SSF47113">
    <property type="entry name" value="Histone-fold"/>
    <property type="match status" value="1"/>
</dbReference>
<dbReference type="PROSITE" id="PS00047">
    <property type="entry name" value="HISTONE_H4"/>
    <property type="match status" value="1"/>
</dbReference>
<accession>P62777</accession>
<accession>P02306</accession>
<accession>P18678</accession>